<reference key="1">
    <citation type="journal article" date="2007" name="Proc. Natl. Acad. Sci. U.S.A.">
        <title>Genome plasticity of BCG and impact on vaccine efficacy.</title>
        <authorList>
            <person name="Brosch R."/>
            <person name="Gordon S.V."/>
            <person name="Garnier T."/>
            <person name="Eiglmeier K."/>
            <person name="Frigui W."/>
            <person name="Valenti P."/>
            <person name="Dos Santos S."/>
            <person name="Duthoy S."/>
            <person name="Lacroix C."/>
            <person name="Garcia-Pelayo C."/>
            <person name="Inwald J.K."/>
            <person name="Golby P."/>
            <person name="Garcia J.N."/>
            <person name="Hewinson R.G."/>
            <person name="Behr M.A."/>
            <person name="Quail M.A."/>
            <person name="Churcher C."/>
            <person name="Barrell B.G."/>
            <person name="Parkhill J."/>
            <person name="Cole S.T."/>
        </authorList>
    </citation>
    <scope>NUCLEOTIDE SEQUENCE [LARGE SCALE GENOMIC DNA]</scope>
    <source>
        <strain>BCG / Pasteur 1173P2</strain>
    </source>
</reference>
<gene>
    <name evidence="1" type="primary">miaB</name>
    <name type="ordered locus">BCG_2746c</name>
</gene>
<accession>A1KM71</accession>
<evidence type="ECO:0000255" key="1">
    <source>
        <dbReference type="HAMAP-Rule" id="MF_01864"/>
    </source>
</evidence>
<evidence type="ECO:0000255" key="2">
    <source>
        <dbReference type="PROSITE-ProRule" id="PRU01266"/>
    </source>
</evidence>
<evidence type="ECO:0000256" key="3">
    <source>
        <dbReference type="SAM" id="MobiDB-lite"/>
    </source>
</evidence>
<evidence type="ECO:0000305" key="4"/>
<protein>
    <recommendedName>
        <fullName evidence="1">tRNA-2-methylthio-N(6)-dimethylallyladenosine synthase</fullName>
        <ecNumber evidence="1">2.8.4.3</ecNumber>
    </recommendedName>
    <alternativeName>
        <fullName evidence="1">(Dimethylallyl)adenosine tRNA methylthiotransferase MiaB</fullName>
    </alternativeName>
    <alternativeName>
        <fullName evidence="1">tRNA-i(6)A37 methylthiotransferase</fullName>
    </alternativeName>
</protein>
<dbReference type="EC" id="2.8.4.3" evidence="1"/>
<dbReference type="EMBL" id="AM408590">
    <property type="protein sequence ID" value="CAL72734.1"/>
    <property type="status" value="ALT_INIT"/>
    <property type="molecule type" value="Genomic_DNA"/>
</dbReference>
<dbReference type="SMR" id="A1KM71"/>
<dbReference type="KEGG" id="mbb:BCG_2746c"/>
<dbReference type="HOGENOM" id="CLU_018697_2_2_11"/>
<dbReference type="Proteomes" id="UP000001472">
    <property type="component" value="Chromosome"/>
</dbReference>
<dbReference type="GO" id="GO:0005829">
    <property type="term" value="C:cytosol"/>
    <property type="evidence" value="ECO:0007669"/>
    <property type="project" value="TreeGrafter"/>
</dbReference>
<dbReference type="GO" id="GO:0051539">
    <property type="term" value="F:4 iron, 4 sulfur cluster binding"/>
    <property type="evidence" value="ECO:0007669"/>
    <property type="project" value="UniProtKB-UniRule"/>
</dbReference>
<dbReference type="GO" id="GO:0046872">
    <property type="term" value="F:metal ion binding"/>
    <property type="evidence" value="ECO:0007669"/>
    <property type="project" value="UniProtKB-KW"/>
</dbReference>
<dbReference type="GO" id="GO:0035597">
    <property type="term" value="F:N6-isopentenyladenosine methylthiotransferase activity"/>
    <property type="evidence" value="ECO:0007669"/>
    <property type="project" value="TreeGrafter"/>
</dbReference>
<dbReference type="CDD" id="cd01335">
    <property type="entry name" value="Radical_SAM"/>
    <property type="match status" value="1"/>
</dbReference>
<dbReference type="FunFam" id="3.40.50.12160:FF:000008">
    <property type="entry name" value="tRNA-2-methylthio-N(6)-dimethylallyladenosine synthase"/>
    <property type="match status" value="1"/>
</dbReference>
<dbReference type="FunFam" id="3.80.30.20:FF:000001">
    <property type="entry name" value="tRNA-2-methylthio-N(6)-dimethylallyladenosine synthase 2"/>
    <property type="match status" value="1"/>
</dbReference>
<dbReference type="Gene3D" id="3.40.50.12160">
    <property type="entry name" value="Methylthiotransferase, N-terminal domain"/>
    <property type="match status" value="1"/>
</dbReference>
<dbReference type="Gene3D" id="3.80.30.20">
    <property type="entry name" value="tm_1862 like domain"/>
    <property type="match status" value="1"/>
</dbReference>
<dbReference type="HAMAP" id="MF_01864">
    <property type="entry name" value="tRNA_metthiotr_MiaB"/>
    <property type="match status" value="1"/>
</dbReference>
<dbReference type="InterPro" id="IPR006638">
    <property type="entry name" value="Elp3/MiaA/NifB-like_rSAM"/>
</dbReference>
<dbReference type="InterPro" id="IPR005839">
    <property type="entry name" value="Methylthiotransferase"/>
</dbReference>
<dbReference type="InterPro" id="IPR020612">
    <property type="entry name" value="Methylthiotransferase_CS"/>
</dbReference>
<dbReference type="InterPro" id="IPR013848">
    <property type="entry name" value="Methylthiotransferase_N"/>
</dbReference>
<dbReference type="InterPro" id="IPR038135">
    <property type="entry name" value="Methylthiotransferase_N_sf"/>
</dbReference>
<dbReference type="InterPro" id="IPR006463">
    <property type="entry name" value="MiaB_methiolase"/>
</dbReference>
<dbReference type="InterPro" id="IPR007197">
    <property type="entry name" value="rSAM"/>
</dbReference>
<dbReference type="InterPro" id="IPR023404">
    <property type="entry name" value="rSAM_horseshoe"/>
</dbReference>
<dbReference type="InterPro" id="IPR002792">
    <property type="entry name" value="TRAM_dom"/>
</dbReference>
<dbReference type="NCBIfam" id="TIGR01574">
    <property type="entry name" value="miaB-methiolase"/>
    <property type="match status" value="1"/>
</dbReference>
<dbReference type="NCBIfam" id="TIGR00089">
    <property type="entry name" value="MiaB/RimO family radical SAM methylthiotransferase"/>
    <property type="match status" value="1"/>
</dbReference>
<dbReference type="PANTHER" id="PTHR43020">
    <property type="entry name" value="CDK5 REGULATORY SUBUNIT-ASSOCIATED PROTEIN 1"/>
    <property type="match status" value="1"/>
</dbReference>
<dbReference type="PANTHER" id="PTHR43020:SF2">
    <property type="entry name" value="MITOCHONDRIAL TRNA METHYLTHIOTRANSFERASE CDK5RAP1"/>
    <property type="match status" value="1"/>
</dbReference>
<dbReference type="Pfam" id="PF04055">
    <property type="entry name" value="Radical_SAM"/>
    <property type="match status" value="1"/>
</dbReference>
<dbReference type="Pfam" id="PF00919">
    <property type="entry name" value="UPF0004"/>
    <property type="match status" value="1"/>
</dbReference>
<dbReference type="SFLD" id="SFLDF00273">
    <property type="entry name" value="(dimethylallyl)adenosine_tRNA"/>
    <property type="match status" value="1"/>
</dbReference>
<dbReference type="SFLD" id="SFLDG01082">
    <property type="entry name" value="B12-binding_domain_containing"/>
    <property type="match status" value="1"/>
</dbReference>
<dbReference type="SFLD" id="SFLDG01061">
    <property type="entry name" value="methylthiotransferase"/>
    <property type="match status" value="1"/>
</dbReference>
<dbReference type="SMART" id="SM00729">
    <property type="entry name" value="Elp3"/>
    <property type="match status" value="1"/>
</dbReference>
<dbReference type="SUPFAM" id="SSF102114">
    <property type="entry name" value="Radical SAM enzymes"/>
    <property type="match status" value="1"/>
</dbReference>
<dbReference type="PROSITE" id="PS51449">
    <property type="entry name" value="MTTASE_N"/>
    <property type="match status" value="1"/>
</dbReference>
<dbReference type="PROSITE" id="PS01278">
    <property type="entry name" value="MTTASE_RADICAL"/>
    <property type="match status" value="1"/>
</dbReference>
<dbReference type="PROSITE" id="PS51918">
    <property type="entry name" value="RADICAL_SAM"/>
    <property type="match status" value="1"/>
</dbReference>
<dbReference type="PROSITE" id="PS50926">
    <property type="entry name" value="TRAM"/>
    <property type="match status" value="1"/>
</dbReference>
<comment type="function">
    <text evidence="1">Catalyzes the methylthiolation of N6-(dimethylallyl)adenosine (i(6)A), leading to the formation of 2-methylthio-N6-(dimethylallyl)adenosine (ms(2)i(6)A) at position 37 in tRNAs that read codons beginning with uridine.</text>
</comment>
<comment type="catalytic activity">
    <reaction evidence="1">
        <text>N(6)-dimethylallyladenosine(37) in tRNA + (sulfur carrier)-SH + AH2 + 2 S-adenosyl-L-methionine = 2-methylsulfanyl-N(6)-dimethylallyladenosine(37) in tRNA + (sulfur carrier)-H + 5'-deoxyadenosine + L-methionine + A + S-adenosyl-L-homocysteine + 2 H(+)</text>
        <dbReference type="Rhea" id="RHEA:37067"/>
        <dbReference type="Rhea" id="RHEA-COMP:10375"/>
        <dbReference type="Rhea" id="RHEA-COMP:10376"/>
        <dbReference type="Rhea" id="RHEA-COMP:14737"/>
        <dbReference type="Rhea" id="RHEA-COMP:14739"/>
        <dbReference type="ChEBI" id="CHEBI:13193"/>
        <dbReference type="ChEBI" id="CHEBI:15378"/>
        <dbReference type="ChEBI" id="CHEBI:17319"/>
        <dbReference type="ChEBI" id="CHEBI:17499"/>
        <dbReference type="ChEBI" id="CHEBI:29917"/>
        <dbReference type="ChEBI" id="CHEBI:57844"/>
        <dbReference type="ChEBI" id="CHEBI:57856"/>
        <dbReference type="ChEBI" id="CHEBI:59789"/>
        <dbReference type="ChEBI" id="CHEBI:64428"/>
        <dbReference type="ChEBI" id="CHEBI:74415"/>
        <dbReference type="ChEBI" id="CHEBI:74417"/>
        <dbReference type="EC" id="2.8.4.3"/>
    </reaction>
</comment>
<comment type="cofactor">
    <cofactor evidence="1">
        <name>[4Fe-4S] cluster</name>
        <dbReference type="ChEBI" id="CHEBI:49883"/>
    </cofactor>
    <text evidence="1">Binds 2 [4Fe-4S] clusters. One cluster is coordinated with 3 cysteines and an exchangeable S-adenosyl-L-methionine.</text>
</comment>
<comment type="subunit">
    <text evidence="1">Monomer.</text>
</comment>
<comment type="subcellular location">
    <subcellularLocation>
        <location evidence="1">Cytoplasm</location>
    </subcellularLocation>
</comment>
<comment type="similarity">
    <text evidence="1">Belongs to the methylthiotransferase family. MiaB subfamily.</text>
</comment>
<comment type="sequence caution" evidence="4">
    <conflict type="erroneous initiation">
        <sequence resource="EMBL-CDS" id="CAL72734"/>
    </conflict>
    <text>Truncated N-terminus.</text>
</comment>
<feature type="chain" id="PRO_0000374385" description="tRNA-2-methylthio-N(6)-dimethylallyladenosine synthase">
    <location>
        <begin position="1"/>
        <end position="545"/>
    </location>
</feature>
<feature type="domain" description="MTTase N-terminal" evidence="1">
    <location>
        <begin position="58"/>
        <end position="174"/>
    </location>
</feature>
<feature type="domain" description="Radical SAM core" evidence="2">
    <location>
        <begin position="197"/>
        <end position="433"/>
    </location>
</feature>
<feature type="domain" description="TRAM" evidence="1">
    <location>
        <begin position="436"/>
        <end position="504"/>
    </location>
</feature>
<feature type="region of interest" description="Disordered" evidence="3">
    <location>
        <begin position="1"/>
        <end position="32"/>
    </location>
</feature>
<feature type="binding site" evidence="1">
    <location>
        <position position="67"/>
    </location>
    <ligand>
        <name>[4Fe-4S] cluster</name>
        <dbReference type="ChEBI" id="CHEBI:49883"/>
        <label>1</label>
    </ligand>
</feature>
<feature type="binding site" evidence="1">
    <location>
        <position position="103"/>
    </location>
    <ligand>
        <name>[4Fe-4S] cluster</name>
        <dbReference type="ChEBI" id="CHEBI:49883"/>
        <label>1</label>
    </ligand>
</feature>
<feature type="binding site" evidence="1">
    <location>
        <position position="137"/>
    </location>
    <ligand>
        <name>[4Fe-4S] cluster</name>
        <dbReference type="ChEBI" id="CHEBI:49883"/>
        <label>1</label>
    </ligand>
</feature>
<feature type="binding site" evidence="1">
    <location>
        <position position="211"/>
    </location>
    <ligand>
        <name>[4Fe-4S] cluster</name>
        <dbReference type="ChEBI" id="CHEBI:49883"/>
        <label>2</label>
        <note>4Fe-4S-S-AdoMet</note>
    </ligand>
</feature>
<feature type="binding site" evidence="1">
    <location>
        <position position="215"/>
    </location>
    <ligand>
        <name>[4Fe-4S] cluster</name>
        <dbReference type="ChEBI" id="CHEBI:49883"/>
        <label>2</label>
        <note>4Fe-4S-S-AdoMet</note>
    </ligand>
</feature>
<feature type="binding site" evidence="1">
    <location>
        <position position="218"/>
    </location>
    <ligand>
        <name>[4Fe-4S] cluster</name>
        <dbReference type="ChEBI" id="CHEBI:49883"/>
        <label>2</label>
        <note>4Fe-4S-S-AdoMet</note>
    </ligand>
</feature>
<organism>
    <name type="scientific">Mycobacterium bovis (strain BCG / Pasteur 1173P2)</name>
    <dbReference type="NCBI Taxonomy" id="410289"/>
    <lineage>
        <taxon>Bacteria</taxon>
        <taxon>Bacillati</taxon>
        <taxon>Actinomycetota</taxon>
        <taxon>Actinomycetes</taxon>
        <taxon>Mycobacteriales</taxon>
        <taxon>Mycobacteriaceae</taxon>
        <taxon>Mycobacterium</taxon>
        <taxon>Mycobacterium tuberculosis complex</taxon>
    </lineage>
</organism>
<name>MIAB_MYCBP</name>
<proteinExistence type="inferred from homology"/>
<sequence length="545" mass="58381">MSSASPLARCCDEATPSAGPRAAQPPYHGPVTSMVAHDAAAGVTGEGAGPPVRRAPARTYQVRTYGCQMNVHDSERLAGLLEAAGYRRATDGSEADVVVFNTCAVRENADNRLYGNLSHLAPRKRANPDMQIAVGGCLAQKDRDAVLRRAPWVDVVFGTHNIGSLPTLLERARHNKVAQVEIAEALQQFPSSLPSSRESAYAAWVSISVGCNNSCTFCIVPSLRGREVDRSPADILAEVRSLVNDGVLEVTLLGQNVNAYGVSFADPALPRNRGAFAELLRACGDIDGLERVRFTSPHPAEFTDDVIEAMAQTRNVCPALHMPLQSGSDRILRAMRRSYRAERYLGIIERVRAAIPHAAITTDLIVGFPGETEEDFAATLDVVRRARFAAAFTFQYSKRPGTPAAQLDGQLPKAVVQERYERLIALQEQISLEANRALVGQAVEVLVATGEGRKDTVTARMSGRARDGRLVHFTAGQPRVRPGDVITTKVTEAAPHHLIADAGVLTHRRTRAGDAHTAGQPGRAVGLGMPGVGLPVSAAKPGGCR</sequence>
<keyword id="KW-0004">4Fe-4S</keyword>
<keyword id="KW-0963">Cytoplasm</keyword>
<keyword id="KW-0408">Iron</keyword>
<keyword id="KW-0411">Iron-sulfur</keyword>
<keyword id="KW-0479">Metal-binding</keyword>
<keyword id="KW-0949">S-adenosyl-L-methionine</keyword>
<keyword id="KW-0808">Transferase</keyword>
<keyword id="KW-0819">tRNA processing</keyword>